<dbReference type="EC" id="7.1.1.-" evidence="1"/>
<dbReference type="EMBL" id="AP009369">
    <property type="protein sequence ID" value="BAF50080.1"/>
    <property type="molecule type" value="Genomic_DNA"/>
</dbReference>
<dbReference type="RefSeq" id="YP_001123255.1">
    <property type="nucleotide sequence ID" value="NC_009268.1"/>
</dbReference>
<dbReference type="SMR" id="A4QK75"/>
<dbReference type="GeneID" id="4962577"/>
<dbReference type="GO" id="GO:0009535">
    <property type="term" value="C:chloroplast thylakoid membrane"/>
    <property type="evidence" value="ECO:0007669"/>
    <property type="project" value="UniProtKB-SubCell"/>
</dbReference>
<dbReference type="GO" id="GO:0003954">
    <property type="term" value="F:NADH dehydrogenase activity"/>
    <property type="evidence" value="ECO:0007669"/>
    <property type="project" value="TreeGrafter"/>
</dbReference>
<dbReference type="GO" id="GO:0016655">
    <property type="term" value="F:oxidoreductase activity, acting on NAD(P)H, quinone or similar compound as acceptor"/>
    <property type="evidence" value="ECO:0007669"/>
    <property type="project" value="UniProtKB-UniRule"/>
</dbReference>
<dbReference type="GO" id="GO:0048038">
    <property type="term" value="F:quinone binding"/>
    <property type="evidence" value="ECO:0007669"/>
    <property type="project" value="UniProtKB-KW"/>
</dbReference>
<dbReference type="GO" id="GO:0009060">
    <property type="term" value="P:aerobic respiration"/>
    <property type="evidence" value="ECO:0007669"/>
    <property type="project" value="TreeGrafter"/>
</dbReference>
<dbReference type="GO" id="GO:0019684">
    <property type="term" value="P:photosynthesis, light reaction"/>
    <property type="evidence" value="ECO:0007669"/>
    <property type="project" value="UniProtKB-UniRule"/>
</dbReference>
<dbReference type="HAMAP" id="MF_01350">
    <property type="entry name" value="NDH1_NuoH"/>
    <property type="match status" value="1"/>
</dbReference>
<dbReference type="InterPro" id="IPR001694">
    <property type="entry name" value="NADH_UbQ_OxRdtase_su1/FPO"/>
</dbReference>
<dbReference type="InterPro" id="IPR018086">
    <property type="entry name" value="NADH_UbQ_OxRdtase_su1_CS"/>
</dbReference>
<dbReference type="NCBIfam" id="NF004741">
    <property type="entry name" value="PRK06076.1-2"/>
    <property type="match status" value="1"/>
</dbReference>
<dbReference type="PANTHER" id="PTHR11432">
    <property type="entry name" value="NADH DEHYDROGENASE SUBUNIT 1"/>
    <property type="match status" value="1"/>
</dbReference>
<dbReference type="PANTHER" id="PTHR11432:SF3">
    <property type="entry name" value="NADH-UBIQUINONE OXIDOREDUCTASE CHAIN 1"/>
    <property type="match status" value="1"/>
</dbReference>
<dbReference type="Pfam" id="PF00146">
    <property type="entry name" value="NADHdh"/>
    <property type="match status" value="1"/>
</dbReference>
<dbReference type="PROSITE" id="PS00667">
    <property type="entry name" value="COMPLEX1_ND1_1"/>
    <property type="match status" value="1"/>
</dbReference>
<dbReference type="PROSITE" id="PS00668">
    <property type="entry name" value="COMPLEX1_ND1_2"/>
    <property type="match status" value="1"/>
</dbReference>
<protein>
    <recommendedName>
        <fullName evidence="1">NAD(P)H-quinone oxidoreductase subunit 1, chloroplastic</fullName>
        <ecNumber evidence="1">7.1.1.-</ecNumber>
    </recommendedName>
    <alternativeName>
        <fullName evidence="1">NAD(P)H dehydrogenase subunit 1</fullName>
        <shortName evidence="1">NDH subunit 1</shortName>
    </alternativeName>
    <alternativeName>
        <fullName evidence="1">NADH-plastoquinone oxidoreductase subunit 1</fullName>
    </alternativeName>
</protein>
<feature type="chain" id="PRO_0000298865" description="NAD(P)H-quinone oxidoreductase subunit 1, chloroplastic">
    <location>
        <begin position="1"/>
        <end position="365"/>
    </location>
</feature>
<feature type="transmembrane region" description="Helical" evidence="1">
    <location>
        <begin position="27"/>
        <end position="47"/>
    </location>
</feature>
<feature type="transmembrane region" description="Helical" evidence="1">
    <location>
        <begin position="98"/>
        <end position="118"/>
    </location>
</feature>
<feature type="transmembrane region" description="Helical" evidence="1">
    <location>
        <begin position="129"/>
        <end position="149"/>
    </location>
</feature>
<feature type="transmembrane region" description="Helical" evidence="1">
    <location>
        <begin position="165"/>
        <end position="185"/>
    </location>
</feature>
<feature type="transmembrane region" description="Helical" evidence="1">
    <location>
        <begin position="203"/>
        <end position="223"/>
    </location>
</feature>
<feature type="transmembrane region" description="Helical" evidence="1">
    <location>
        <begin position="253"/>
        <end position="273"/>
    </location>
</feature>
<feature type="transmembrane region" description="Helical" evidence="1">
    <location>
        <begin position="302"/>
        <end position="322"/>
    </location>
</feature>
<feature type="transmembrane region" description="Helical" evidence="1">
    <location>
        <begin position="345"/>
        <end position="365"/>
    </location>
</feature>
<organism>
    <name type="scientific">Arabis hirsuta</name>
    <name type="common">Hairy rock-cress</name>
    <name type="synonym">Turritis hirsuta</name>
    <dbReference type="NCBI Taxonomy" id="78191"/>
    <lineage>
        <taxon>Eukaryota</taxon>
        <taxon>Viridiplantae</taxon>
        <taxon>Streptophyta</taxon>
        <taxon>Embryophyta</taxon>
        <taxon>Tracheophyta</taxon>
        <taxon>Spermatophyta</taxon>
        <taxon>Magnoliopsida</taxon>
        <taxon>eudicotyledons</taxon>
        <taxon>Gunneridae</taxon>
        <taxon>Pentapetalae</taxon>
        <taxon>rosids</taxon>
        <taxon>malvids</taxon>
        <taxon>Brassicales</taxon>
        <taxon>Brassicaceae</taxon>
        <taxon>Arabideae</taxon>
        <taxon>Arabis</taxon>
    </lineage>
</organism>
<accession>A4QK75</accession>
<comment type="function">
    <text evidence="1">NDH shuttles electrons from NAD(P)H:plastoquinone, via FMN and iron-sulfur (Fe-S) centers, to quinones in the photosynthetic chain and possibly in a chloroplast respiratory chain. The immediate electron acceptor for the enzyme in this species is believed to be plastoquinone. Couples the redox reaction to proton translocation, and thus conserves the redox energy in a proton gradient.</text>
</comment>
<comment type="catalytic activity">
    <reaction evidence="1">
        <text>a plastoquinone + NADH + (n+1) H(+)(in) = a plastoquinol + NAD(+) + n H(+)(out)</text>
        <dbReference type="Rhea" id="RHEA:42608"/>
        <dbReference type="Rhea" id="RHEA-COMP:9561"/>
        <dbReference type="Rhea" id="RHEA-COMP:9562"/>
        <dbReference type="ChEBI" id="CHEBI:15378"/>
        <dbReference type="ChEBI" id="CHEBI:17757"/>
        <dbReference type="ChEBI" id="CHEBI:57540"/>
        <dbReference type="ChEBI" id="CHEBI:57945"/>
        <dbReference type="ChEBI" id="CHEBI:62192"/>
    </reaction>
</comment>
<comment type="catalytic activity">
    <reaction evidence="1">
        <text>a plastoquinone + NADPH + (n+1) H(+)(in) = a plastoquinol + NADP(+) + n H(+)(out)</text>
        <dbReference type="Rhea" id="RHEA:42612"/>
        <dbReference type="Rhea" id="RHEA-COMP:9561"/>
        <dbReference type="Rhea" id="RHEA-COMP:9562"/>
        <dbReference type="ChEBI" id="CHEBI:15378"/>
        <dbReference type="ChEBI" id="CHEBI:17757"/>
        <dbReference type="ChEBI" id="CHEBI:57783"/>
        <dbReference type="ChEBI" id="CHEBI:58349"/>
        <dbReference type="ChEBI" id="CHEBI:62192"/>
    </reaction>
</comment>
<comment type="subunit">
    <text evidence="1">NDH is composed of at least 16 different subunits, 5 of which are encoded in the nucleus.</text>
</comment>
<comment type="subcellular location">
    <subcellularLocation>
        <location evidence="1">Plastid</location>
        <location evidence="1">Chloroplast thylakoid membrane</location>
        <topology evidence="1">Multi-pass membrane protein</topology>
    </subcellularLocation>
</comment>
<comment type="similarity">
    <text evidence="1">Belongs to the complex I subunit 1 family.</text>
</comment>
<evidence type="ECO:0000255" key="1">
    <source>
        <dbReference type="HAMAP-Rule" id="MF_01350"/>
    </source>
</evidence>
<keyword id="KW-0150">Chloroplast</keyword>
<keyword id="KW-0472">Membrane</keyword>
<keyword id="KW-0520">NAD</keyword>
<keyword id="KW-0521">NADP</keyword>
<keyword id="KW-0934">Plastid</keyword>
<keyword id="KW-0618">Plastoquinone</keyword>
<keyword id="KW-0874">Quinone</keyword>
<keyword id="KW-0793">Thylakoid</keyword>
<keyword id="KW-1278">Translocase</keyword>
<keyword id="KW-0812">Transmembrane</keyword>
<keyword id="KW-1133">Transmembrane helix</keyword>
<gene>
    <name evidence="1" type="primary">ndhA</name>
</gene>
<sequence>MIIYATEVETINSFVRLESLKELYSLVWIFVPIFSLVLGIITGVLVIAWIERELSAGIQQRIGPEYAGPLGILQALADGTKLLFKEDLRPSRGNTPLFSIGPSIAVISILLSYSVIPFSNHLVLADLNIGIFLWIAISSIAPIGLLMSGYGSNNKYSFLGGLRAAAQSISYEIPLTLCVLSISLLSNSLSTVDIVEAQSKYGFWGWNLWRQPIGFIIFLISSLAECERLPFDLPEAEEELIAGYQTEYSGIKFGLFYVASYINLLISSLFVTILYLGGWNISIPYISIPYISILELFERDPIFGTTIGIFITLAKTYLFLFISIATRWTLPRLRMDQLLNLGWKFLLPISLGNLLLTTSFQLFSL</sequence>
<reference key="1">
    <citation type="submission" date="2007-03" db="EMBL/GenBank/DDBJ databases">
        <title>Sequencing analysis of Arabis hirsuta chloroplast DNA.</title>
        <authorList>
            <person name="Hosouchi T."/>
            <person name="Tsuruoka H."/>
            <person name="Kotani H."/>
        </authorList>
    </citation>
    <scope>NUCLEOTIDE SEQUENCE [LARGE SCALE GENOMIC DNA]</scope>
    <source>
        <strain>JO23</strain>
    </source>
</reference>
<geneLocation type="chloroplast"/>
<proteinExistence type="inferred from homology"/>
<name>NU1C_ARAHI</name>